<gene>
    <name evidence="1" type="primary">hemC</name>
    <name type="ordered locus">HPG27_217</name>
</gene>
<feature type="chain" id="PRO_1000114158" description="Porphobilinogen deaminase">
    <location>
        <begin position="1"/>
        <end position="306"/>
    </location>
</feature>
<feature type="modified residue" description="S-(dipyrrolylmethanemethyl)cysteine" evidence="1">
    <location>
        <position position="239"/>
    </location>
</feature>
<dbReference type="EC" id="2.5.1.61" evidence="1"/>
<dbReference type="EMBL" id="CP001173">
    <property type="protein sequence ID" value="ACI26984.1"/>
    <property type="molecule type" value="Genomic_DNA"/>
</dbReference>
<dbReference type="RefSeq" id="WP_000527576.1">
    <property type="nucleotide sequence ID" value="NC_011333.1"/>
</dbReference>
<dbReference type="SMR" id="B5ZA04"/>
<dbReference type="KEGG" id="hpg:HPG27_217"/>
<dbReference type="HOGENOM" id="CLU_019704_0_2_7"/>
<dbReference type="UniPathway" id="UPA00251">
    <property type="reaction ID" value="UER00319"/>
</dbReference>
<dbReference type="Proteomes" id="UP000001735">
    <property type="component" value="Chromosome"/>
</dbReference>
<dbReference type="GO" id="GO:0005737">
    <property type="term" value="C:cytoplasm"/>
    <property type="evidence" value="ECO:0007669"/>
    <property type="project" value="TreeGrafter"/>
</dbReference>
<dbReference type="GO" id="GO:0004418">
    <property type="term" value="F:hydroxymethylbilane synthase activity"/>
    <property type="evidence" value="ECO:0007669"/>
    <property type="project" value="UniProtKB-UniRule"/>
</dbReference>
<dbReference type="GO" id="GO:0006782">
    <property type="term" value="P:protoporphyrinogen IX biosynthetic process"/>
    <property type="evidence" value="ECO:0007669"/>
    <property type="project" value="UniProtKB-UniRule"/>
</dbReference>
<dbReference type="CDD" id="cd13646">
    <property type="entry name" value="PBP2_EcHMBS_like"/>
    <property type="match status" value="1"/>
</dbReference>
<dbReference type="FunFam" id="3.40.190.10:FF:000004">
    <property type="entry name" value="Porphobilinogen deaminase"/>
    <property type="match status" value="1"/>
</dbReference>
<dbReference type="FunFam" id="3.40.190.10:FF:000005">
    <property type="entry name" value="Porphobilinogen deaminase"/>
    <property type="match status" value="1"/>
</dbReference>
<dbReference type="Gene3D" id="3.40.190.10">
    <property type="entry name" value="Periplasmic binding protein-like II"/>
    <property type="match status" value="2"/>
</dbReference>
<dbReference type="Gene3D" id="3.30.160.40">
    <property type="entry name" value="Porphobilinogen deaminase, C-terminal domain"/>
    <property type="match status" value="1"/>
</dbReference>
<dbReference type="HAMAP" id="MF_00260">
    <property type="entry name" value="Porphobil_deam"/>
    <property type="match status" value="1"/>
</dbReference>
<dbReference type="InterPro" id="IPR000860">
    <property type="entry name" value="HemC"/>
</dbReference>
<dbReference type="InterPro" id="IPR022419">
    <property type="entry name" value="Porphobilin_deaminase_cofac_BS"/>
</dbReference>
<dbReference type="InterPro" id="IPR022417">
    <property type="entry name" value="Porphobilin_deaminase_N"/>
</dbReference>
<dbReference type="InterPro" id="IPR022418">
    <property type="entry name" value="Porphobilinogen_deaminase_C"/>
</dbReference>
<dbReference type="InterPro" id="IPR036803">
    <property type="entry name" value="Porphobilinogen_deaminase_C_sf"/>
</dbReference>
<dbReference type="NCBIfam" id="TIGR00212">
    <property type="entry name" value="hemC"/>
    <property type="match status" value="1"/>
</dbReference>
<dbReference type="PANTHER" id="PTHR11557">
    <property type="entry name" value="PORPHOBILINOGEN DEAMINASE"/>
    <property type="match status" value="1"/>
</dbReference>
<dbReference type="PANTHER" id="PTHR11557:SF0">
    <property type="entry name" value="PORPHOBILINOGEN DEAMINASE"/>
    <property type="match status" value="1"/>
</dbReference>
<dbReference type="Pfam" id="PF01379">
    <property type="entry name" value="Porphobil_deam"/>
    <property type="match status" value="1"/>
</dbReference>
<dbReference type="Pfam" id="PF03900">
    <property type="entry name" value="Porphobil_deamC"/>
    <property type="match status" value="1"/>
</dbReference>
<dbReference type="PIRSF" id="PIRSF001438">
    <property type="entry name" value="4pyrrol_synth_OHMeBilane_synth"/>
    <property type="match status" value="1"/>
</dbReference>
<dbReference type="PRINTS" id="PR00151">
    <property type="entry name" value="PORPHBDMNASE"/>
</dbReference>
<dbReference type="SUPFAM" id="SSF53850">
    <property type="entry name" value="Periplasmic binding protein-like II"/>
    <property type="match status" value="1"/>
</dbReference>
<dbReference type="SUPFAM" id="SSF54782">
    <property type="entry name" value="Porphobilinogen deaminase (hydroxymethylbilane synthase), C-terminal domain"/>
    <property type="match status" value="1"/>
</dbReference>
<dbReference type="PROSITE" id="PS00533">
    <property type="entry name" value="PORPHOBILINOGEN_DEAM"/>
    <property type="match status" value="1"/>
</dbReference>
<sequence length="306" mass="33956">MGNLVIGSRGSELALWQANHIKERLKKECFIESEIQIVKTKGDKILDTPLNKIGGKGLFTKELEELLLKGAIDLAVHSLKDVPVVFEKGLDLACITKRADVRDTFLSVKFPDLMSLPKGAKVGTTSLRRSMQIKLKRQDLDTESLRGNVQTRLKKLECGEFDAIILAEAGLCRLEIQGAKYRKAFSVEEMIPSMGQGALGVEMLKNHKHFATLQKLNDEESAFCCHLEREFVKGLNGGCQIPIGVHASLMGDRVKIQAVLGLPNGKEVITKEKRGDKTKAFDLVQDLLEEFLQSGAKEILEKAQLF</sequence>
<comment type="function">
    <text evidence="1">Tetrapolymerization of the monopyrrole PBG into the hydroxymethylbilane pre-uroporphyrinogen in several discrete steps.</text>
</comment>
<comment type="catalytic activity">
    <reaction evidence="1">
        <text>4 porphobilinogen + H2O = hydroxymethylbilane + 4 NH4(+)</text>
        <dbReference type="Rhea" id="RHEA:13185"/>
        <dbReference type="ChEBI" id="CHEBI:15377"/>
        <dbReference type="ChEBI" id="CHEBI:28938"/>
        <dbReference type="ChEBI" id="CHEBI:57845"/>
        <dbReference type="ChEBI" id="CHEBI:58126"/>
        <dbReference type="EC" id="2.5.1.61"/>
    </reaction>
</comment>
<comment type="cofactor">
    <cofactor evidence="1">
        <name>dipyrromethane</name>
        <dbReference type="ChEBI" id="CHEBI:60342"/>
    </cofactor>
    <text evidence="1">Binds 1 dipyrromethane group covalently.</text>
</comment>
<comment type="pathway">
    <text evidence="1">Porphyrin-containing compound metabolism; protoporphyrin-IX biosynthesis; coproporphyrinogen-III from 5-aminolevulinate: step 2/4.</text>
</comment>
<comment type="subunit">
    <text evidence="1">Monomer.</text>
</comment>
<comment type="miscellaneous">
    <text evidence="1">The porphobilinogen subunits are added to the dipyrromethane group.</text>
</comment>
<comment type="similarity">
    <text evidence="1">Belongs to the HMBS family.</text>
</comment>
<organism>
    <name type="scientific">Helicobacter pylori (strain G27)</name>
    <dbReference type="NCBI Taxonomy" id="563041"/>
    <lineage>
        <taxon>Bacteria</taxon>
        <taxon>Pseudomonadati</taxon>
        <taxon>Campylobacterota</taxon>
        <taxon>Epsilonproteobacteria</taxon>
        <taxon>Campylobacterales</taxon>
        <taxon>Helicobacteraceae</taxon>
        <taxon>Helicobacter</taxon>
    </lineage>
</organism>
<proteinExistence type="inferred from homology"/>
<reference key="1">
    <citation type="journal article" date="2009" name="J. Bacteriol.">
        <title>The complete genome sequence of Helicobacter pylori strain G27.</title>
        <authorList>
            <person name="Baltrus D.A."/>
            <person name="Amieva M.R."/>
            <person name="Covacci A."/>
            <person name="Lowe T.M."/>
            <person name="Merrell D.S."/>
            <person name="Ottemann K.M."/>
            <person name="Stein M."/>
            <person name="Salama N.R."/>
            <person name="Guillemin K."/>
        </authorList>
    </citation>
    <scope>NUCLEOTIDE SEQUENCE [LARGE SCALE GENOMIC DNA]</scope>
    <source>
        <strain>G27</strain>
    </source>
</reference>
<keyword id="KW-0627">Porphyrin biosynthesis</keyword>
<keyword id="KW-1185">Reference proteome</keyword>
<keyword id="KW-0808">Transferase</keyword>
<evidence type="ECO:0000255" key="1">
    <source>
        <dbReference type="HAMAP-Rule" id="MF_00260"/>
    </source>
</evidence>
<protein>
    <recommendedName>
        <fullName evidence="1">Porphobilinogen deaminase</fullName>
        <shortName evidence="1">PBG</shortName>
        <ecNumber evidence="1">2.5.1.61</ecNumber>
    </recommendedName>
    <alternativeName>
        <fullName evidence="1">Hydroxymethylbilane synthase</fullName>
        <shortName evidence="1">HMBS</shortName>
    </alternativeName>
    <alternativeName>
        <fullName evidence="1">Pre-uroporphyrinogen synthase</fullName>
    </alternativeName>
</protein>
<name>HEM3_HELPG</name>
<accession>B5ZA04</accession>